<proteinExistence type="inferred from homology"/>
<sequence>MEDFWEDWDLAFEDVFPKSLKEALEGIKEIPTYGERGASRFMYNLLKLEKEKRKEIIEKVLEAVEVLRPCRECFLITDREVCPICSDEKRSKKFICVVEESQDAYAIEKLERYKGVYHVLQGHIAPLEGISAEDLTIDALMERIKKYQPKEVILATNPNVEGEATANYIAGLIRRKFPAVKITRTAYGFQFGSLIEFVDEYSLEKSMENRK</sequence>
<accession>O67455</accession>
<reference key="1">
    <citation type="journal article" date="1998" name="Nature">
        <title>The complete genome of the hyperthermophilic bacterium Aquifex aeolicus.</title>
        <authorList>
            <person name="Deckert G."/>
            <person name="Warren P.V."/>
            <person name="Gaasterland T."/>
            <person name="Young W.G."/>
            <person name="Lenox A.L."/>
            <person name="Graham D.E."/>
            <person name="Overbeek R."/>
            <person name="Snead M.A."/>
            <person name="Keller M."/>
            <person name="Aujay M."/>
            <person name="Huber R."/>
            <person name="Feldman R.A."/>
            <person name="Short J.M."/>
            <person name="Olsen G.J."/>
            <person name="Swanson R.V."/>
        </authorList>
    </citation>
    <scope>NUCLEOTIDE SEQUENCE [LARGE SCALE GENOMIC DNA]</scope>
    <source>
        <strain>VF5</strain>
    </source>
</reference>
<gene>
    <name evidence="1" type="primary">recR</name>
    <name type="ordered locus">aq_1478</name>
</gene>
<name>RECR_AQUAE</name>
<keyword id="KW-0227">DNA damage</keyword>
<keyword id="KW-0233">DNA recombination</keyword>
<keyword id="KW-0234">DNA repair</keyword>
<keyword id="KW-0479">Metal-binding</keyword>
<keyword id="KW-1185">Reference proteome</keyword>
<keyword id="KW-0862">Zinc</keyword>
<keyword id="KW-0863">Zinc-finger</keyword>
<protein>
    <recommendedName>
        <fullName evidence="1">Recombination protein RecR</fullName>
    </recommendedName>
</protein>
<feature type="chain" id="PRO_0000190271" description="Recombination protein RecR">
    <location>
        <begin position="1"/>
        <end position="211"/>
    </location>
</feature>
<feature type="domain" description="Toprim" evidence="1">
    <location>
        <begin position="93"/>
        <end position="190"/>
    </location>
</feature>
<feature type="zinc finger region" description="C4-type" evidence="1">
    <location>
        <begin position="70"/>
        <end position="85"/>
    </location>
</feature>
<organism>
    <name type="scientific">Aquifex aeolicus (strain VF5)</name>
    <dbReference type="NCBI Taxonomy" id="224324"/>
    <lineage>
        <taxon>Bacteria</taxon>
        <taxon>Pseudomonadati</taxon>
        <taxon>Aquificota</taxon>
        <taxon>Aquificia</taxon>
        <taxon>Aquificales</taxon>
        <taxon>Aquificaceae</taxon>
        <taxon>Aquifex</taxon>
    </lineage>
</organism>
<comment type="function">
    <text evidence="1">May play a role in DNA repair. It seems to be involved in an RecBC-independent recombinational process of DNA repair. It may act with RecF and RecO.</text>
</comment>
<comment type="similarity">
    <text evidence="1">Belongs to the RecR family.</text>
</comment>
<dbReference type="EMBL" id="AE000657">
    <property type="protein sequence ID" value="AAC07416.1"/>
    <property type="molecule type" value="Genomic_DNA"/>
</dbReference>
<dbReference type="PIR" id="E70428">
    <property type="entry name" value="E70428"/>
</dbReference>
<dbReference type="RefSeq" id="NP_214020.1">
    <property type="nucleotide sequence ID" value="NC_000918.1"/>
</dbReference>
<dbReference type="RefSeq" id="WP_010880958.1">
    <property type="nucleotide sequence ID" value="NC_000918.1"/>
</dbReference>
<dbReference type="SMR" id="O67455"/>
<dbReference type="FunCoup" id="O67455">
    <property type="interactions" value="198"/>
</dbReference>
<dbReference type="STRING" id="224324.aq_1478"/>
<dbReference type="EnsemblBacteria" id="AAC07416">
    <property type="protein sequence ID" value="AAC07416"/>
    <property type="gene ID" value="aq_1478"/>
</dbReference>
<dbReference type="KEGG" id="aae:aq_1478"/>
<dbReference type="PATRIC" id="fig|224324.8.peg.1152"/>
<dbReference type="eggNOG" id="COG0353">
    <property type="taxonomic scope" value="Bacteria"/>
</dbReference>
<dbReference type="HOGENOM" id="CLU_060739_1_0_0"/>
<dbReference type="InParanoid" id="O67455"/>
<dbReference type="OrthoDB" id="9802672at2"/>
<dbReference type="Proteomes" id="UP000000798">
    <property type="component" value="Chromosome"/>
</dbReference>
<dbReference type="GO" id="GO:0003677">
    <property type="term" value="F:DNA binding"/>
    <property type="evidence" value="ECO:0007669"/>
    <property type="project" value="UniProtKB-UniRule"/>
</dbReference>
<dbReference type="GO" id="GO:0008270">
    <property type="term" value="F:zinc ion binding"/>
    <property type="evidence" value="ECO:0007669"/>
    <property type="project" value="UniProtKB-KW"/>
</dbReference>
<dbReference type="GO" id="GO:0006302">
    <property type="term" value="P:double-strand break repair"/>
    <property type="evidence" value="ECO:0000318"/>
    <property type="project" value="GO_Central"/>
</dbReference>
<dbReference type="GO" id="GO:0000725">
    <property type="term" value="P:recombinational repair"/>
    <property type="evidence" value="ECO:0000318"/>
    <property type="project" value="GO_Central"/>
</dbReference>
<dbReference type="CDD" id="cd01025">
    <property type="entry name" value="TOPRIM_recR"/>
    <property type="match status" value="1"/>
</dbReference>
<dbReference type="Gene3D" id="3.30.60.80">
    <property type="match status" value="1"/>
</dbReference>
<dbReference type="Gene3D" id="3.40.1360.10">
    <property type="match status" value="1"/>
</dbReference>
<dbReference type="HAMAP" id="MF_00017">
    <property type="entry name" value="RecR"/>
    <property type="match status" value="1"/>
</dbReference>
<dbReference type="InterPro" id="IPR000093">
    <property type="entry name" value="DNA_Rcmb_RecR"/>
</dbReference>
<dbReference type="InterPro" id="IPR023627">
    <property type="entry name" value="Rcmb_RecR"/>
</dbReference>
<dbReference type="InterPro" id="IPR015967">
    <property type="entry name" value="Rcmb_RecR_Znf"/>
</dbReference>
<dbReference type="InterPro" id="IPR006171">
    <property type="entry name" value="TOPRIM_dom"/>
</dbReference>
<dbReference type="InterPro" id="IPR034137">
    <property type="entry name" value="TOPRIM_RecR"/>
</dbReference>
<dbReference type="NCBIfam" id="TIGR00615">
    <property type="entry name" value="recR"/>
    <property type="match status" value="1"/>
</dbReference>
<dbReference type="PANTHER" id="PTHR30446">
    <property type="entry name" value="RECOMBINATION PROTEIN RECR"/>
    <property type="match status" value="1"/>
</dbReference>
<dbReference type="PANTHER" id="PTHR30446:SF0">
    <property type="entry name" value="RECOMBINATION PROTEIN RECR"/>
    <property type="match status" value="1"/>
</dbReference>
<dbReference type="Pfam" id="PF02132">
    <property type="entry name" value="RecR_ZnF"/>
    <property type="match status" value="1"/>
</dbReference>
<dbReference type="Pfam" id="PF13662">
    <property type="entry name" value="Toprim_4"/>
    <property type="match status" value="1"/>
</dbReference>
<dbReference type="SMART" id="SM00493">
    <property type="entry name" value="TOPRIM"/>
    <property type="match status" value="1"/>
</dbReference>
<dbReference type="SUPFAM" id="SSF111304">
    <property type="entry name" value="Recombination protein RecR"/>
    <property type="match status" value="1"/>
</dbReference>
<dbReference type="PROSITE" id="PS01300">
    <property type="entry name" value="RECR"/>
    <property type="match status" value="1"/>
</dbReference>
<dbReference type="PROSITE" id="PS50880">
    <property type="entry name" value="TOPRIM"/>
    <property type="match status" value="1"/>
</dbReference>
<evidence type="ECO:0000255" key="1">
    <source>
        <dbReference type="HAMAP-Rule" id="MF_00017"/>
    </source>
</evidence>